<gene>
    <name evidence="1" type="primary">thiM</name>
    <name type="ordered locus">HPG27_803</name>
</gene>
<sequence length="260" mass="27797">MVLKELRQKRPLVHNITNYVVAQFVANGLLALGASPLMSDAIDEMQDLAKISDALAINIGTLNERTILCAKEAIKHYKALNKPIVLDPVGCSASALRHDTSLELLESEGISALRGNAAELGSLVGISCESKGLDSHDATTPVEIIKRAAQKYSVIAVMTGKTDYVSDGKKVLSITGGSEYLALITGAGCLHAAACASFLGLKKDPLDSMVQLCALYKQAAFSAQKKVLENNGSNGSFLFYFLDALSLPIKLENSLIKEEW</sequence>
<proteinExistence type="inferred from homology"/>
<name>THIM_HELPG</name>
<dbReference type="EC" id="2.7.1.50" evidence="1"/>
<dbReference type="EMBL" id="CP001173">
    <property type="protein sequence ID" value="ACI27558.1"/>
    <property type="molecule type" value="Genomic_DNA"/>
</dbReference>
<dbReference type="SMR" id="B5Z7K9"/>
<dbReference type="KEGG" id="hpg:HPG27_803"/>
<dbReference type="HOGENOM" id="CLU_019943_0_1_7"/>
<dbReference type="UniPathway" id="UPA00060">
    <property type="reaction ID" value="UER00139"/>
</dbReference>
<dbReference type="Proteomes" id="UP000001735">
    <property type="component" value="Chromosome"/>
</dbReference>
<dbReference type="GO" id="GO:0005524">
    <property type="term" value="F:ATP binding"/>
    <property type="evidence" value="ECO:0007669"/>
    <property type="project" value="UniProtKB-UniRule"/>
</dbReference>
<dbReference type="GO" id="GO:0004417">
    <property type="term" value="F:hydroxyethylthiazole kinase activity"/>
    <property type="evidence" value="ECO:0007669"/>
    <property type="project" value="UniProtKB-UniRule"/>
</dbReference>
<dbReference type="GO" id="GO:0000287">
    <property type="term" value="F:magnesium ion binding"/>
    <property type="evidence" value="ECO:0007669"/>
    <property type="project" value="UniProtKB-UniRule"/>
</dbReference>
<dbReference type="GO" id="GO:0009228">
    <property type="term" value="P:thiamine biosynthetic process"/>
    <property type="evidence" value="ECO:0007669"/>
    <property type="project" value="UniProtKB-KW"/>
</dbReference>
<dbReference type="GO" id="GO:0009229">
    <property type="term" value="P:thiamine diphosphate biosynthetic process"/>
    <property type="evidence" value="ECO:0007669"/>
    <property type="project" value="UniProtKB-UniRule"/>
</dbReference>
<dbReference type="CDD" id="cd01170">
    <property type="entry name" value="THZ_kinase"/>
    <property type="match status" value="1"/>
</dbReference>
<dbReference type="Gene3D" id="3.40.1190.20">
    <property type="match status" value="1"/>
</dbReference>
<dbReference type="HAMAP" id="MF_00228">
    <property type="entry name" value="Thz_kinase"/>
    <property type="match status" value="1"/>
</dbReference>
<dbReference type="InterPro" id="IPR000417">
    <property type="entry name" value="Hyethyz_kinase"/>
</dbReference>
<dbReference type="InterPro" id="IPR029056">
    <property type="entry name" value="Ribokinase-like"/>
</dbReference>
<dbReference type="NCBIfam" id="NF006830">
    <property type="entry name" value="PRK09355.1"/>
    <property type="match status" value="1"/>
</dbReference>
<dbReference type="NCBIfam" id="TIGR00694">
    <property type="entry name" value="thiM"/>
    <property type="match status" value="1"/>
</dbReference>
<dbReference type="Pfam" id="PF02110">
    <property type="entry name" value="HK"/>
    <property type="match status" value="1"/>
</dbReference>
<dbReference type="PIRSF" id="PIRSF000513">
    <property type="entry name" value="Thz_kinase"/>
    <property type="match status" value="1"/>
</dbReference>
<dbReference type="PRINTS" id="PR01099">
    <property type="entry name" value="HYETHTZKNASE"/>
</dbReference>
<dbReference type="SUPFAM" id="SSF53613">
    <property type="entry name" value="Ribokinase-like"/>
    <property type="match status" value="1"/>
</dbReference>
<comment type="function">
    <text evidence="1">Catalyzes the phosphorylation of the hydroxyl group of 4-methyl-5-beta-hydroxyethylthiazole (THZ).</text>
</comment>
<comment type="catalytic activity">
    <reaction evidence="1">
        <text>5-(2-hydroxyethyl)-4-methylthiazole + ATP = 4-methyl-5-(2-phosphooxyethyl)-thiazole + ADP + H(+)</text>
        <dbReference type="Rhea" id="RHEA:24212"/>
        <dbReference type="ChEBI" id="CHEBI:15378"/>
        <dbReference type="ChEBI" id="CHEBI:17957"/>
        <dbReference type="ChEBI" id="CHEBI:30616"/>
        <dbReference type="ChEBI" id="CHEBI:58296"/>
        <dbReference type="ChEBI" id="CHEBI:456216"/>
        <dbReference type="EC" id="2.7.1.50"/>
    </reaction>
</comment>
<comment type="cofactor">
    <cofactor evidence="1">
        <name>Mg(2+)</name>
        <dbReference type="ChEBI" id="CHEBI:18420"/>
    </cofactor>
</comment>
<comment type="pathway">
    <text evidence="1">Cofactor biosynthesis; thiamine diphosphate biosynthesis; 4-methyl-5-(2-phosphoethyl)-thiazole from 5-(2-hydroxyethyl)-4-methylthiazole: step 1/1.</text>
</comment>
<comment type="similarity">
    <text evidence="1">Belongs to the Thz kinase family.</text>
</comment>
<organism>
    <name type="scientific">Helicobacter pylori (strain G27)</name>
    <dbReference type="NCBI Taxonomy" id="563041"/>
    <lineage>
        <taxon>Bacteria</taxon>
        <taxon>Pseudomonadati</taxon>
        <taxon>Campylobacterota</taxon>
        <taxon>Epsilonproteobacteria</taxon>
        <taxon>Campylobacterales</taxon>
        <taxon>Helicobacteraceae</taxon>
        <taxon>Helicobacter</taxon>
    </lineage>
</organism>
<keyword id="KW-0067">ATP-binding</keyword>
<keyword id="KW-0418">Kinase</keyword>
<keyword id="KW-0460">Magnesium</keyword>
<keyword id="KW-0479">Metal-binding</keyword>
<keyword id="KW-0547">Nucleotide-binding</keyword>
<keyword id="KW-1185">Reference proteome</keyword>
<keyword id="KW-0784">Thiamine biosynthesis</keyword>
<keyword id="KW-0808">Transferase</keyword>
<reference key="1">
    <citation type="journal article" date="2009" name="J. Bacteriol.">
        <title>The complete genome sequence of Helicobacter pylori strain G27.</title>
        <authorList>
            <person name="Baltrus D.A."/>
            <person name="Amieva M.R."/>
            <person name="Covacci A."/>
            <person name="Lowe T.M."/>
            <person name="Merrell D.S."/>
            <person name="Ottemann K.M."/>
            <person name="Stein M."/>
            <person name="Salama N.R."/>
            <person name="Guillemin K."/>
        </authorList>
    </citation>
    <scope>NUCLEOTIDE SEQUENCE [LARGE SCALE GENOMIC DNA]</scope>
    <source>
        <strain>G27</strain>
    </source>
</reference>
<protein>
    <recommendedName>
        <fullName evidence="1">Hydroxyethylthiazole kinase</fullName>
        <ecNumber evidence="1">2.7.1.50</ecNumber>
    </recommendedName>
    <alternativeName>
        <fullName evidence="1">4-methyl-5-beta-hydroxyethylthiazole kinase</fullName>
        <shortName evidence="1">TH kinase</shortName>
        <shortName evidence="1">Thz kinase</shortName>
    </alternativeName>
</protein>
<feature type="chain" id="PRO_1000100415" description="Hydroxyethylthiazole kinase">
    <location>
        <begin position="1"/>
        <end position="260"/>
    </location>
</feature>
<feature type="binding site" evidence="1">
    <location>
        <position position="38"/>
    </location>
    <ligand>
        <name>substrate</name>
    </ligand>
</feature>
<feature type="binding site" evidence="1">
    <location>
        <position position="114"/>
    </location>
    <ligand>
        <name>ATP</name>
        <dbReference type="ChEBI" id="CHEBI:30616"/>
    </ligand>
</feature>
<feature type="binding site" evidence="1">
    <location>
        <position position="159"/>
    </location>
    <ligand>
        <name>ATP</name>
        <dbReference type="ChEBI" id="CHEBI:30616"/>
    </ligand>
</feature>
<feature type="binding site" evidence="1">
    <location>
        <position position="186"/>
    </location>
    <ligand>
        <name>substrate</name>
    </ligand>
</feature>
<accession>B5Z7K9</accession>
<evidence type="ECO:0000255" key="1">
    <source>
        <dbReference type="HAMAP-Rule" id="MF_00228"/>
    </source>
</evidence>